<reference key="1">
    <citation type="journal article" date="2002" name="Nature">
        <title>The genome sequence of Schizosaccharomyces pombe.</title>
        <authorList>
            <person name="Wood V."/>
            <person name="Gwilliam R."/>
            <person name="Rajandream M.A."/>
            <person name="Lyne M.H."/>
            <person name="Lyne R."/>
            <person name="Stewart A."/>
            <person name="Sgouros J.G."/>
            <person name="Peat N."/>
            <person name="Hayles J."/>
            <person name="Baker S.G."/>
            <person name="Basham D."/>
            <person name="Bowman S."/>
            <person name="Brooks K."/>
            <person name="Brown D."/>
            <person name="Brown S."/>
            <person name="Chillingworth T."/>
            <person name="Churcher C.M."/>
            <person name="Collins M."/>
            <person name="Connor R."/>
            <person name="Cronin A."/>
            <person name="Davis P."/>
            <person name="Feltwell T."/>
            <person name="Fraser A."/>
            <person name="Gentles S."/>
            <person name="Goble A."/>
            <person name="Hamlin N."/>
            <person name="Harris D.E."/>
            <person name="Hidalgo J."/>
            <person name="Hodgson G."/>
            <person name="Holroyd S."/>
            <person name="Hornsby T."/>
            <person name="Howarth S."/>
            <person name="Huckle E.J."/>
            <person name="Hunt S."/>
            <person name="Jagels K."/>
            <person name="James K.D."/>
            <person name="Jones L."/>
            <person name="Jones M."/>
            <person name="Leather S."/>
            <person name="McDonald S."/>
            <person name="McLean J."/>
            <person name="Mooney P."/>
            <person name="Moule S."/>
            <person name="Mungall K.L."/>
            <person name="Murphy L.D."/>
            <person name="Niblett D."/>
            <person name="Odell C."/>
            <person name="Oliver K."/>
            <person name="O'Neil S."/>
            <person name="Pearson D."/>
            <person name="Quail M.A."/>
            <person name="Rabbinowitsch E."/>
            <person name="Rutherford K.M."/>
            <person name="Rutter S."/>
            <person name="Saunders D."/>
            <person name="Seeger K."/>
            <person name="Sharp S."/>
            <person name="Skelton J."/>
            <person name="Simmonds M.N."/>
            <person name="Squares R."/>
            <person name="Squares S."/>
            <person name="Stevens K."/>
            <person name="Taylor K."/>
            <person name="Taylor R.G."/>
            <person name="Tivey A."/>
            <person name="Walsh S.V."/>
            <person name="Warren T."/>
            <person name="Whitehead S."/>
            <person name="Woodward J.R."/>
            <person name="Volckaert G."/>
            <person name="Aert R."/>
            <person name="Robben J."/>
            <person name="Grymonprez B."/>
            <person name="Weltjens I."/>
            <person name="Vanstreels E."/>
            <person name="Rieger M."/>
            <person name="Schaefer M."/>
            <person name="Mueller-Auer S."/>
            <person name="Gabel C."/>
            <person name="Fuchs M."/>
            <person name="Duesterhoeft A."/>
            <person name="Fritzc C."/>
            <person name="Holzer E."/>
            <person name="Moestl D."/>
            <person name="Hilbert H."/>
            <person name="Borzym K."/>
            <person name="Langer I."/>
            <person name="Beck A."/>
            <person name="Lehrach H."/>
            <person name="Reinhardt R."/>
            <person name="Pohl T.M."/>
            <person name="Eger P."/>
            <person name="Zimmermann W."/>
            <person name="Wedler H."/>
            <person name="Wambutt R."/>
            <person name="Purnelle B."/>
            <person name="Goffeau A."/>
            <person name="Cadieu E."/>
            <person name="Dreano S."/>
            <person name="Gloux S."/>
            <person name="Lelaure V."/>
            <person name="Mottier S."/>
            <person name="Galibert F."/>
            <person name="Aves S.J."/>
            <person name="Xiang Z."/>
            <person name="Hunt C."/>
            <person name="Moore K."/>
            <person name="Hurst S.M."/>
            <person name="Lucas M."/>
            <person name="Rochet M."/>
            <person name="Gaillardin C."/>
            <person name="Tallada V.A."/>
            <person name="Garzon A."/>
            <person name="Thode G."/>
            <person name="Daga R.R."/>
            <person name="Cruzado L."/>
            <person name="Jimenez J."/>
            <person name="Sanchez M."/>
            <person name="del Rey F."/>
            <person name="Benito J."/>
            <person name="Dominguez A."/>
            <person name="Revuelta J.L."/>
            <person name="Moreno S."/>
            <person name="Armstrong J."/>
            <person name="Forsburg S.L."/>
            <person name="Cerutti L."/>
            <person name="Lowe T."/>
            <person name="McCombie W.R."/>
            <person name="Paulsen I."/>
            <person name="Potashkin J."/>
            <person name="Shpakovski G.V."/>
            <person name="Ussery D."/>
            <person name="Barrell B.G."/>
            <person name="Nurse P."/>
        </authorList>
    </citation>
    <scope>NUCLEOTIDE SEQUENCE [LARGE SCALE GENOMIC DNA]</scope>
    <source>
        <strain>972 / ATCC 24843</strain>
    </source>
</reference>
<reference key="2">
    <citation type="journal article" date="2000" name="Genes Cells">
        <title>Large-scale screening of intracellular protein localization in living fission yeast cells by the use of a GFP-fusion genomic DNA library.</title>
        <authorList>
            <person name="Ding D.-Q."/>
            <person name="Tomita Y."/>
            <person name="Yamamoto A."/>
            <person name="Chikashige Y."/>
            <person name="Haraguchi T."/>
            <person name="Hiraoka Y."/>
        </authorList>
    </citation>
    <scope>NUCLEOTIDE SEQUENCE [LARGE SCALE GENOMIC DNA] OF 147-235</scope>
    <scope>SUBCELLULAR LOCATION</scope>
    <source>
        <strain>ATCC 38364 / 968</strain>
    </source>
</reference>
<reference key="3">
    <citation type="journal article" date="2006" name="Nat. Biotechnol.">
        <title>ORFeome cloning and global analysis of protein localization in the fission yeast Schizosaccharomyces pombe.</title>
        <authorList>
            <person name="Matsuyama A."/>
            <person name="Arai R."/>
            <person name="Yashiroda Y."/>
            <person name="Shirai A."/>
            <person name="Kamata A."/>
            <person name="Sekido S."/>
            <person name="Kobayashi Y."/>
            <person name="Hashimoto A."/>
            <person name="Hamamoto M."/>
            <person name="Hiraoka Y."/>
            <person name="Horinouchi S."/>
            <person name="Yoshida M."/>
        </authorList>
    </citation>
    <scope>SUBCELLULAR LOCATION [LARGE SCALE ANALYSIS]</scope>
</reference>
<protein>
    <recommendedName>
        <fullName>Pre-mRNA-splicing factor 18</fullName>
    </recommendedName>
</protein>
<organism>
    <name type="scientific">Schizosaccharomyces pombe (strain 972 / ATCC 24843)</name>
    <name type="common">Fission yeast</name>
    <dbReference type="NCBI Taxonomy" id="284812"/>
    <lineage>
        <taxon>Eukaryota</taxon>
        <taxon>Fungi</taxon>
        <taxon>Dikarya</taxon>
        <taxon>Ascomycota</taxon>
        <taxon>Taphrinomycotina</taxon>
        <taxon>Schizosaccharomycetes</taxon>
        <taxon>Schizosaccharomycetales</taxon>
        <taxon>Schizosaccharomycetaceae</taxon>
        <taxon>Schizosaccharomyces</taxon>
    </lineage>
</organism>
<gene>
    <name type="primary">prp18</name>
    <name type="ORF">SPCC126.14</name>
</gene>
<dbReference type="EMBL" id="CU329672">
    <property type="protein sequence ID" value="CAA22483.1"/>
    <property type="molecule type" value="Genomic_DNA"/>
</dbReference>
<dbReference type="EMBL" id="AB027939">
    <property type="protein sequence ID" value="BAA87243.1"/>
    <property type="molecule type" value="Genomic_DNA"/>
</dbReference>
<dbReference type="PIR" id="T40918">
    <property type="entry name" value="T40918"/>
</dbReference>
<dbReference type="RefSeq" id="NP_588457.1">
    <property type="nucleotide sequence ID" value="NM_001023448.2"/>
</dbReference>
<dbReference type="SMR" id="O94406"/>
<dbReference type="BioGRID" id="275923">
    <property type="interactions" value="3"/>
</dbReference>
<dbReference type="FunCoup" id="O94406">
    <property type="interactions" value="516"/>
</dbReference>
<dbReference type="STRING" id="284812.O94406"/>
<dbReference type="iPTMnet" id="O94406"/>
<dbReference type="PaxDb" id="4896-SPCC126.14.1"/>
<dbReference type="EnsemblFungi" id="SPCC126.14.1">
    <property type="protein sequence ID" value="SPCC126.14.1:pep"/>
    <property type="gene ID" value="SPCC126.14"/>
</dbReference>
<dbReference type="GeneID" id="2539357"/>
<dbReference type="KEGG" id="spo:2539357"/>
<dbReference type="PomBase" id="SPCC126.14">
    <property type="gene designation" value="prp18"/>
</dbReference>
<dbReference type="VEuPathDB" id="FungiDB:SPCC126.14"/>
<dbReference type="eggNOG" id="KOG2808">
    <property type="taxonomic scope" value="Eukaryota"/>
</dbReference>
<dbReference type="HOGENOM" id="CLU_039675_0_0_1"/>
<dbReference type="InParanoid" id="O94406"/>
<dbReference type="OMA" id="SFAQVRW"/>
<dbReference type="PhylomeDB" id="O94406"/>
<dbReference type="PRO" id="PR:O94406"/>
<dbReference type="Proteomes" id="UP000002485">
    <property type="component" value="Chromosome III"/>
</dbReference>
<dbReference type="GO" id="GO:0005634">
    <property type="term" value="C:nucleus"/>
    <property type="evidence" value="ECO:0007005"/>
    <property type="project" value="PomBase"/>
</dbReference>
<dbReference type="GO" id="GO:0071021">
    <property type="term" value="C:U2-type post-spliceosomal complex"/>
    <property type="evidence" value="ECO:0000318"/>
    <property type="project" value="GO_Central"/>
</dbReference>
<dbReference type="GO" id="GO:0046540">
    <property type="term" value="C:U4/U6 x U5 tri-snRNP complex"/>
    <property type="evidence" value="ECO:0000318"/>
    <property type="project" value="GO_Central"/>
</dbReference>
<dbReference type="GO" id="GO:0005682">
    <property type="term" value="C:U5 snRNP"/>
    <property type="evidence" value="ECO:0000318"/>
    <property type="project" value="GO_Central"/>
</dbReference>
<dbReference type="GO" id="GO:0000350">
    <property type="term" value="P:generation of catalytic spliceosome for second transesterification step"/>
    <property type="evidence" value="ECO:0000318"/>
    <property type="project" value="GO_Central"/>
</dbReference>
<dbReference type="GO" id="GO:0045292">
    <property type="term" value="P:mRNA cis splicing, via spliceosome"/>
    <property type="evidence" value="ECO:0000266"/>
    <property type="project" value="PomBase"/>
</dbReference>
<dbReference type="FunFam" id="1.20.940.10:FF:000013">
    <property type="entry name" value="Pre-mRNA-splicing factor 18"/>
    <property type="match status" value="1"/>
</dbReference>
<dbReference type="Gene3D" id="1.20.940.10">
    <property type="entry name" value="Functional domain of the splicing factor Prp18"/>
    <property type="match status" value="1"/>
</dbReference>
<dbReference type="InterPro" id="IPR004098">
    <property type="entry name" value="Prp18"/>
</dbReference>
<dbReference type="InterPro" id="IPR014906">
    <property type="entry name" value="PRP4-like"/>
</dbReference>
<dbReference type="InterPro" id="IPR036285">
    <property type="entry name" value="PRP4-like_sf"/>
</dbReference>
<dbReference type="InterPro" id="IPR039979">
    <property type="entry name" value="PRPF18"/>
</dbReference>
<dbReference type="PANTHER" id="PTHR13007">
    <property type="entry name" value="PRE-MRNA SPLICING FACTOR-RELATED"/>
    <property type="match status" value="1"/>
</dbReference>
<dbReference type="PANTHER" id="PTHR13007:SF19">
    <property type="entry name" value="PRE-MRNA-SPLICING FACTOR 18"/>
    <property type="match status" value="1"/>
</dbReference>
<dbReference type="Pfam" id="PF02840">
    <property type="entry name" value="Prp18"/>
    <property type="match status" value="1"/>
</dbReference>
<dbReference type="Pfam" id="PF08799">
    <property type="entry name" value="PRP4"/>
    <property type="match status" value="1"/>
</dbReference>
<dbReference type="SMART" id="SM00500">
    <property type="entry name" value="SFM"/>
    <property type="match status" value="1"/>
</dbReference>
<dbReference type="SUPFAM" id="SSF47938">
    <property type="entry name" value="Functional domain of the splicing factor Prp18"/>
    <property type="match status" value="1"/>
</dbReference>
<dbReference type="SUPFAM" id="SSF158230">
    <property type="entry name" value="PRP4-like"/>
    <property type="match status" value="1"/>
</dbReference>
<keyword id="KW-0507">mRNA processing</keyword>
<keyword id="KW-0508">mRNA splicing</keyword>
<keyword id="KW-0539">Nucleus</keyword>
<keyword id="KW-1185">Reference proteome</keyword>
<keyword id="KW-0747">Spliceosome</keyword>
<name>PRP18_SCHPO</name>
<proteinExistence type="inferred from homology"/>
<feature type="chain" id="PRO_0000058585" description="Pre-mRNA-splicing factor 18">
    <location>
        <begin position="1"/>
        <end position="343"/>
    </location>
</feature>
<feature type="region of interest" description="Disordered" evidence="2">
    <location>
        <begin position="80"/>
        <end position="105"/>
    </location>
</feature>
<accession>O94406</accession>
<accession>Q9UTX8</accession>
<comment type="function">
    <text evidence="1">Participates in the second step of pre-mRNA splicing.</text>
</comment>
<comment type="subcellular location">
    <subcellularLocation>
        <location evidence="3 4">Nucleus</location>
    </subcellularLocation>
</comment>
<comment type="similarity">
    <text evidence="5">Belongs to the PRP18 family.</text>
</comment>
<sequence>MDFLKEEIERKRRQLEGTSELPVKKAFRRGDWEKEREKKYLQEKQQKDEQRELKKRKLEEERLKYEEKKLRISRLANKESSRNEELLTETTTPSPAVKASPASTKLSVSENDRLSIPEITKDNLTLTEIIAKLREMKEPIRLFGESEEATIQRYYSLLKYKKLEEIENELLTKGVETIDFEHATTTKPKVSKQVVAFLQHGIRIWDNFLSSKSINSFESSESQMQLKIFRQAKQDLDVLIQLIVDEALNDDIFKSIAEICYRCQKHEFVKANDMYLRLTIGNAPWPIGVTMVGIHERSAHQRLQANPSSNILKDEKKRKCLQALKRFITFQERESSNLPEYTD</sequence>
<evidence type="ECO:0000250" key="1"/>
<evidence type="ECO:0000256" key="2">
    <source>
        <dbReference type="SAM" id="MobiDB-lite"/>
    </source>
</evidence>
<evidence type="ECO:0000269" key="3">
    <source>
    </source>
</evidence>
<evidence type="ECO:0000269" key="4">
    <source>
    </source>
</evidence>
<evidence type="ECO:0000305" key="5"/>